<organism>
    <name type="scientific">Nocardia farcinica (strain IFM 10152)</name>
    <dbReference type="NCBI Taxonomy" id="247156"/>
    <lineage>
        <taxon>Bacteria</taxon>
        <taxon>Bacillati</taxon>
        <taxon>Actinomycetota</taxon>
        <taxon>Actinomycetes</taxon>
        <taxon>Mycobacteriales</taxon>
        <taxon>Nocardiaceae</taxon>
        <taxon>Nocardia</taxon>
    </lineage>
</organism>
<feature type="chain" id="PRO_1000114626" description="Nucleoid-associated protein NFA_2940">
    <location>
        <begin position="1"/>
        <end position="110"/>
    </location>
</feature>
<sequence length="110" mass="11256">MQPGGQFDMQQLLAQAQQMQEAVMQAQAEIAATEVEGQAGGGLVKATIKATGEVQALTIDPKVVDPEDVEGLQDLVIGAINDAMARAQQLAAERLGPLAGGGSMPGLPGF</sequence>
<protein>
    <recommendedName>
        <fullName evidence="1">Nucleoid-associated protein NFA_2940</fullName>
    </recommendedName>
</protein>
<name>Y294_NOCFA</name>
<proteinExistence type="inferred from homology"/>
<comment type="function">
    <text evidence="1">Binds to DNA and alters its conformation. May be involved in regulation of gene expression, nucleoid organization and DNA protection.</text>
</comment>
<comment type="subunit">
    <text evidence="1">Homodimer.</text>
</comment>
<comment type="subcellular location">
    <subcellularLocation>
        <location evidence="1">Cytoplasm</location>
        <location evidence="1">Nucleoid</location>
    </subcellularLocation>
</comment>
<comment type="similarity">
    <text evidence="1">Belongs to the YbaB/EbfC family.</text>
</comment>
<dbReference type="EMBL" id="AP006618">
    <property type="protein sequence ID" value="BAD55136.1"/>
    <property type="molecule type" value="Genomic_DNA"/>
</dbReference>
<dbReference type="RefSeq" id="WP_011206823.1">
    <property type="nucleotide sequence ID" value="NC_006361.1"/>
</dbReference>
<dbReference type="SMR" id="Q5Z355"/>
<dbReference type="STRING" id="247156.NFA_2940"/>
<dbReference type="GeneID" id="61131138"/>
<dbReference type="KEGG" id="nfa:NFA_2940"/>
<dbReference type="eggNOG" id="COG0718">
    <property type="taxonomic scope" value="Bacteria"/>
</dbReference>
<dbReference type="HOGENOM" id="CLU_140930_4_0_11"/>
<dbReference type="OrthoDB" id="9809370at2"/>
<dbReference type="Proteomes" id="UP000006820">
    <property type="component" value="Chromosome"/>
</dbReference>
<dbReference type="GO" id="GO:0043590">
    <property type="term" value="C:bacterial nucleoid"/>
    <property type="evidence" value="ECO:0007669"/>
    <property type="project" value="UniProtKB-UniRule"/>
</dbReference>
<dbReference type="GO" id="GO:0005829">
    <property type="term" value="C:cytosol"/>
    <property type="evidence" value="ECO:0007669"/>
    <property type="project" value="TreeGrafter"/>
</dbReference>
<dbReference type="GO" id="GO:0003677">
    <property type="term" value="F:DNA binding"/>
    <property type="evidence" value="ECO:0007669"/>
    <property type="project" value="UniProtKB-UniRule"/>
</dbReference>
<dbReference type="Gene3D" id="3.30.1310.10">
    <property type="entry name" value="Nucleoid-associated protein YbaB-like domain"/>
    <property type="match status" value="1"/>
</dbReference>
<dbReference type="HAMAP" id="MF_00274">
    <property type="entry name" value="DNA_YbaB_EbfC"/>
    <property type="match status" value="1"/>
</dbReference>
<dbReference type="InterPro" id="IPR036894">
    <property type="entry name" value="YbaB-like_sf"/>
</dbReference>
<dbReference type="InterPro" id="IPR004401">
    <property type="entry name" value="YbaB/EbfC"/>
</dbReference>
<dbReference type="NCBIfam" id="TIGR00103">
    <property type="entry name" value="DNA_YbaB_EbfC"/>
    <property type="match status" value="1"/>
</dbReference>
<dbReference type="PANTHER" id="PTHR33449">
    <property type="entry name" value="NUCLEOID-ASSOCIATED PROTEIN YBAB"/>
    <property type="match status" value="1"/>
</dbReference>
<dbReference type="PANTHER" id="PTHR33449:SF1">
    <property type="entry name" value="NUCLEOID-ASSOCIATED PROTEIN YBAB"/>
    <property type="match status" value="1"/>
</dbReference>
<dbReference type="Pfam" id="PF02575">
    <property type="entry name" value="YbaB_DNA_bd"/>
    <property type="match status" value="1"/>
</dbReference>
<dbReference type="PIRSF" id="PIRSF004555">
    <property type="entry name" value="UCP004555"/>
    <property type="match status" value="1"/>
</dbReference>
<dbReference type="SUPFAM" id="SSF82607">
    <property type="entry name" value="YbaB-like"/>
    <property type="match status" value="1"/>
</dbReference>
<accession>Q5Z355</accession>
<evidence type="ECO:0000255" key="1">
    <source>
        <dbReference type="HAMAP-Rule" id="MF_00274"/>
    </source>
</evidence>
<reference key="1">
    <citation type="journal article" date="2004" name="Proc. Natl. Acad. Sci. U.S.A.">
        <title>The complete genomic sequence of Nocardia farcinica IFM 10152.</title>
        <authorList>
            <person name="Ishikawa J."/>
            <person name="Yamashita A."/>
            <person name="Mikami Y."/>
            <person name="Hoshino Y."/>
            <person name="Kurita H."/>
            <person name="Hotta K."/>
            <person name="Shiba T."/>
            <person name="Hattori M."/>
        </authorList>
    </citation>
    <scope>NUCLEOTIDE SEQUENCE [LARGE SCALE GENOMIC DNA]</scope>
    <source>
        <strain>IFM 10152</strain>
    </source>
</reference>
<keyword id="KW-0963">Cytoplasm</keyword>
<keyword id="KW-0238">DNA-binding</keyword>
<keyword id="KW-1185">Reference proteome</keyword>
<gene>
    <name type="ordered locus">NFA_2940</name>
</gene>